<protein>
    <recommendedName>
        <fullName>NADH-ubiquinone oxidoreductase chain 4L</fullName>
        <ecNumber>7.1.1.2</ecNumber>
    </recommendedName>
    <alternativeName>
        <fullName>NADH dehydrogenase subunit 4L</fullName>
    </alternativeName>
</protein>
<sequence>MTPIFTNIILAFATAFLGTLIFRSHLMSSLLCLEGMMLSLFILSTLIILNMHLTVSFMMPILLLVFAACEAAIGLALLVMVSNTYGLDYIKNLNLLQC</sequence>
<gene>
    <name type="primary">MT-ND4L</name>
    <name type="synonym">MTND4L</name>
    <name type="synonym">NADH4L</name>
    <name type="synonym">ND4L</name>
</gene>
<organism>
    <name type="scientific">Avahi cleesei</name>
    <name type="common">Cleese's woolly lemur</name>
    <name type="synonym">Bemaraha woolly lemur</name>
    <dbReference type="NCBI Taxonomy" id="402244"/>
    <lineage>
        <taxon>Eukaryota</taxon>
        <taxon>Metazoa</taxon>
        <taxon>Chordata</taxon>
        <taxon>Craniata</taxon>
        <taxon>Vertebrata</taxon>
        <taxon>Euteleostomi</taxon>
        <taxon>Mammalia</taxon>
        <taxon>Eutheria</taxon>
        <taxon>Euarchontoglires</taxon>
        <taxon>Primates</taxon>
        <taxon>Strepsirrhini</taxon>
        <taxon>Lemuriformes</taxon>
        <taxon>Indriidae</taxon>
        <taxon>Avahi</taxon>
    </lineage>
</organism>
<dbReference type="EC" id="7.1.1.2"/>
<dbReference type="EMBL" id="DQ856113">
    <property type="protein sequence ID" value="ABI54996.1"/>
    <property type="molecule type" value="Genomic_DNA"/>
</dbReference>
<dbReference type="EMBL" id="DQ856114">
    <property type="protein sequence ID" value="ABI55000.1"/>
    <property type="molecule type" value="Genomic_DNA"/>
</dbReference>
<dbReference type="EMBL" id="DQ856115">
    <property type="protein sequence ID" value="ABI55004.1"/>
    <property type="molecule type" value="Genomic_DNA"/>
</dbReference>
<dbReference type="EMBL" id="DQ856116">
    <property type="protein sequence ID" value="ABI55008.1"/>
    <property type="molecule type" value="Genomic_DNA"/>
</dbReference>
<dbReference type="EMBL" id="DQ856117">
    <property type="protein sequence ID" value="ABI55012.1"/>
    <property type="molecule type" value="Genomic_DNA"/>
</dbReference>
<dbReference type="SMR" id="A8DQK8"/>
<dbReference type="GO" id="GO:0005743">
    <property type="term" value="C:mitochondrial inner membrane"/>
    <property type="evidence" value="ECO:0000250"/>
    <property type="project" value="UniProtKB"/>
</dbReference>
<dbReference type="GO" id="GO:0045271">
    <property type="term" value="C:respiratory chain complex I"/>
    <property type="evidence" value="ECO:0000250"/>
    <property type="project" value="UniProtKB"/>
</dbReference>
<dbReference type="GO" id="GO:0008137">
    <property type="term" value="F:NADH dehydrogenase (ubiquinone) activity"/>
    <property type="evidence" value="ECO:0000250"/>
    <property type="project" value="UniProtKB"/>
</dbReference>
<dbReference type="GO" id="GO:0042773">
    <property type="term" value="P:ATP synthesis coupled electron transport"/>
    <property type="evidence" value="ECO:0007669"/>
    <property type="project" value="InterPro"/>
</dbReference>
<dbReference type="FunFam" id="1.10.287.3510:FF:000002">
    <property type="entry name" value="NADH-ubiquinone oxidoreductase chain 4L"/>
    <property type="match status" value="1"/>
</dbReference>
<dbReference type="Gene3D" id="1.10.287.3510">
    <property type="match status" value="1"/>
</dbReference>
<dbReference type="InterPro" id="IPR001133">
    <property type="entry name" value="NADH_UbQ_OxRdtase_chain4L/K"/>
</dbReference>
<dbReference type="InterPro" id="IPR039428">
    <property type="entry name" value="NUOK/Mnh_C1-like"/>
</dbReference>
<dbReference type="PANTHER" id="PTHR11434:SF0">
    <property type="entry name" value="NADH-UBIQUINONE OXIDOREDUCTASE CHAIN 4L"/>
    <property type="match status" value="1"/>
</dbReference>
<dbReference type="PANTHER" id="PTHR11434">
    <property type="entry name" value="NADH-UBIQUINONE OXIDOREDUCTASE SUBUNIT ND4L"/>
    <property type="match status" value="1"/>
</dbReference>
<dbReference type="Pfam" id="PF00420">
    <property type="entry name" value="Oxidored_q2"/>
    <property type="match status" value="1"/>
</dbReference>
<reference key="1">
    <citation type="journal article" date="2007" name="Spec. Publ. Mus. Tex. Tech. Univ.">
        <title>Molecular phylogeny and taxonomic revision of the woolly lemurs, genus Avahi (primates: lemuriformes).</title>
        <authorList>
            <person name="Andriantompohavana R."/>
            <person name="Lei R."/>
            <person name="Zaonarivelo J.R."/>
            <person name="Engberg S.E."/>
            <person name="Nalanirina G."/>
            <person name="McGuire S.M."/>
            <person name="Shore G.D."/>
            <person name="Andrianasolo J."/>
            <person name="Herrington K."/>
            <person name="Brenneman R.A."/>
            <person name="Louis E.E. Jr."/>
        </authorList>
    </citation>
    <scope>NUCLEOTIDE SEQUENCE [GENOMIC DNA]</scope>
    <source>
        <strain>Isolate BEMA12</strain>
        <strain>Isolate BEMA13</strain>
        <strain>Isolate BEMA14</strain>
        <strain>Isolate BEMA8</strain>
        <strain>Isolate BEMA9</strain>
    </source>
</reference>
<evidence type="ECO:0000250" key="1">
    <source>
        <dbReference type="UniProtKB" id="P03901"/>
    </source>
</evidence>
<evidence type="ECO:0000250" key="2">
    <source>
        <dbReference type="UniProtKB" id="P03902"/>
    </source>
</evidence>
<evidence type="ECO:0000255" key="3"/>
<evidence type="ECO:0000305" key="4"/>
<name>NU4LM_AVACL</name>
<geneLocation type="mitochondrion"/>
<proteinExistence type="inferred from homology"/>
<accession>A8DQK8</accession>
<accession>A8DQK4</accession>
<comment type="function">
    <text evidence="1">Core subunit of the mitochondrial membrane respiratory chain NADH dehydrogenase (Complex I) which catalyzes electron transfer from NADH through the respiratory chain, using ubiquinone as an electron acceptor. Part of the enzyme membrane arm which is embedded in the lipid bilayer and involved in proton translocation.</text>
</comment>
<comment type="catalytic activity">
    <reaction evidence="1">
        <text>a ubiquinone + NADH + 5 H(+)(in) = a ubiquinol + NAD(+) + 4 H(+)(out)</text>
        <dbReference type="Rhea" id="RHEA:29091"/>
        <dbReference type="Rhea" id="RHEA-COMP:9565"/>
        <dbReference type="Rhea" id="RHEA-COMP:9566"/>
        <dbReference type="ChEBI" id="CHEBI:15378"/>
        <dbReference type="ChEBI" id="CHEBI:16389"/>
        <dbReference type="ChEBI" id="CHEBI:17976"/>
        <dbReference type="ChEBI" id="CHEBI:57540"/>
        <dbReference type="ChEBI" id="CHEBI:57945"/>
        <dbReference type="EC" id="7.1.1.2"/>
    </reaction>
    <physiologicalReaction direction="left-to-right" evidence="1">
        <dbReference type="Rhea" id="RHEA:29092"/>
    </physiologicalReaction>
</comment>
<comment type="subunit">
    <text evidence="2">Core subunit of respiratory chain NADH dehydrogenase (Complex I) which is composed of 45 different subunits.</text>
</comment>
<comment type="subcellular location">
    <subcellularLocation>
        <location evidence="2">Mitochondrion inner membrane</location>
        <topology evidence="3">Multi-pass membrane protein</topology>
    </subcellularLocation>
</comment>
<comment type="similarity">
    <text evidence="4">Belongs to the complex I subunit 4L family.</text>
</comment>
<keyword id="KW-0249">Electron transport</keyword>
<keyword id="KW-0472">Membrane</keyword>
<keyword id="KW-0496">Mitochondrion</keyword>
<keyword id="KW-0999">Mitochondrion inner membrane</keyword>
<keyword id="KW-0520">NAD</keyword>
<keyword id="KW-0679">Respiratory chain</keyword>
<keyword id="KW-1278">Translocase</keyword>
<keyword id="KW-0812">Transmembrane</keyword>
<keyword id="KW-1133">Transmembrane helix</keyword>
<keyword id="KW-0813">Transport</keyword>
<keyword id="KW-0830">Ubiquinone</keyword>
<feature type="chain" id="PRO_0000323386" description="NADH-ubiquinone oxidoreductase chain 4L">
    <location>
        <begin position="1"/>
        <end position="98"/>
    </location>
</feature>
<feature type="transmembrane region" description="Helical" evidence="3">
    <location>
        <begin position="2"/>
        <end position="22"/>
    </location>
</feature>
<feature type="transmembrane region" description="Helical" evidence="3">
    <location>
        <begin position="29"/>
        <end position="49"/>
    </location>
</feature>
<feature type="transmembrane region" description="Helical" evidence="3">
    <location>
        <begin position="61"/>
        <end position="81"/>
    </location>
</feature>
<feature type="sequence variant" description="In strain: Isolate BEMA8.">
    <original>M</original>
    <variation>T</variation>
    <location>
        <position position="58"/>
    </location>
</feature>